<gene>
    <name type="primary">HXK2</name>
</gene>
<keyword id="KW-0067">ATP-binding</keyword>
<keyword id="KW-0150">Chloroplast</keyword>
<keyword id="KW-0324">Glycolysis</keyword>
<keyword id="KW-0418">Kinase</keyword>
<keyword id="KW-0547">Nucleotide-binding</keyword>
<keyword id="KW-0934">Plastid</keyword>
<keyword id="KW-1185">Reference proteome</keyword>
<keyword id="KW-0808">Transferase</keyword>
<keyword id="KW-0809">Transit peptide</keyword>
<organism>
    <name type="scientific">Nicotiana tabacum</name>
    <name type="common">Common tobacco</name>
    <dbReference type="NCBI Taxonomy" id="4097"/>
    <lineage>
        <taxon>Eukaryota</taxon>
        <taxon>Viridiplantae</taxon>
        <taxon>Streptophyta</taxon>
        <taxon>Embryophyta</taxon>
        <taxon>Tracheophyta</taxon>
        <taxon>Spermatophyta</taxon>
        <taxon>Magnoliopsida</taxon>
        <taxon>eudicotyledons</taxon>
        <taxon>Gunneridae</taxon>
        <taxon>Pentapetalae</taxon>
        <taxon>asterids</taxon>
        <taxon>lamiids</taxon>
        <taxon>Solanales</taxon>
        <taxon>Solanaceae</taxon>
        <taxon>Nicotianoideae</taxon>
        <taxon>Nicotianeae</taxon>
        <taxon>Nicotiana</taxon>
    </lineage>
</organism>
<reference key="1">
    <citation type="journal article" date="2005" name="FEBS Lett.">
        <title>Isolation and functional characterization of a novel plastidic hexokinase from Nicotiana tabacum.</title>
        <authorList>
            <person name="Giese J.-O."/>
            <person name="Herbers K."/>
            <person name="Hoffmann M."/>
            <person name="Kloesgen R.B."/>
            <person name="Sonnewald U."/>
        </authorList>
    </citation>
    <scope>NUCLEOTIDE SEQUENCE [MRNA]</scope>
    <scope>FUNCTION</scope>
    <scope>SUBCELLULAR LOCATION</scope>
    <scope>TISSUE SPECIFICITY</scope>
</reference>
<evidence type="ECO:0000250" key="1">
    <source>
        <dbReference type="UniProtKB" id="Q8LQ68"/>
    </source>
</evidence>
<evidence type="ECO:0000255" key="2"/>
<evidence type="ECO:0000255" key="3">
    <source>
        <dbReference type="PROSITE-ProRule" id="PRU01084"/>
    </source>
</evidence>
<evidence type="ECO:0000269" key="4">
    <source>
    </source>
</evidence>
<evidence type="ECO:0000305" key="5"/>
<evidence type="ECO:0000305" key="6">
    <source>
    </source>
</evidence>
<comment type="function">
    <text evidence="4">Fructose and glucose phosphorylating enzyme.</text>
</comment>
<comment type="catalytic activity">
    <reaction evidence="6">
        <text>a D-hexose + ATP = a D-hexose 6-phosphate + ADP + H(+)</text>
        <dbReference type="Rhea" id="RHEA:22740"/>
        <dbReference type="ChEBI" id="CHEBI:4194"/>
        <dbReference type="ChEBI" id="CHEBI:15378"/>
        <dbReference type="ChEBI" id="CHEBI:30616"/>
        <dbReference type="ChEBI" id="CHEBI:229467"/>
        <dbReference type="ChEBI" id="CHEBI:456216"/>
        <dbReference type="EC" id="2.7.1.1"/>
    </reaction>
    <physiologicalReaction direction="left-to-right" evidence="6">
        <dbReference type="Rhea" id="RHEA:22741"/>
    </physiologicalReaction>
</comment>
<comment type="catalytic activity">
    <reaction evidence="6">
        <text>D-fructose + ATP = D-fructose 6-phosphate + ADP + H(+)</text>
        <dbReference type="Rhea" id="RHEA:16125"/>
        <dbReference type="ChEBI" id="CHEBI:15378"/>
        <dbReference type="ChEBI" id="CHEBI:30616"/>
        <dbReference type="ChEBI" id="CHEBI:37721"/>
        <dbReference type="ChEBI" id="CHEBI:61527"/>
        <dbReference type="ChEBI" id="CHEBI:456216"/>
        <dbReference type="EC" id="2.7.1.1"/>
    </reaction>
    <physiologicalReaction direction="left-to-right" evidence="6">
        <dbReference type="Rhea" id="RHEA:16126"/>
    </physiologicalReaction>
</comment>
<comment type="catalytic activity">
    <reaction evidence="6">
        <text>D-glucose + ATP = D-glucose 6-phosphate + ADP + H(+)</text>
        <dbReference type="Rhea" id="RHEA:17825"/>
        <dbReference type="ChEBI" id="CHEBI:4167"/>
        <dbReference type="ChEBI" id="CHEBI:15378"/>
        <dbReference type="ChEBI" id="CHEBI:30616"/>
        <dbReference type="ChEBI" id="CHEBI:61548"/>
        <dbReference type="ChEBI" id="CHEBI:456216"/>
        <dbReference type="EC" id="2.7.1.1"/>
    </reaction>
    <physiologicalReaction direction="left-to-right" evidence="6">
        <dbReference type="Rhea" id="RHEA:17826"/>
    </physiologicalReaction>
</comment>
<comment type="pathway">
    <text evidence="6">Carbohydrate metabolism; hexose metabolism.</text>
</comment>
<comment type="pathway">
    <text evidence="6">Carbohydrate degradation; glycolysis; D-glyceraldehyde 3-phosphate and glycerone phosphate from D-glucose: step 1/4.</text>
</comment>
<comment type="subcellular location">
    <subcellularLocation>
        <location evidence="6">Plastid</location>
        <location evidence="6">Chloroplast stroma</location>
    </subcellularLocation>
</comment>
<comment type="tissue specificity">
    <text evidence="4">Expressed in vascular starch sheath, xylem parenchyma, guard cells and root tips.</text>
</comment>
<comment type="similarity">
    <text evidence="3 5">Belongs to the hexokinase family.</text>
</comment>
<feature type="transit peptide" description="Chloroplast" evidence="2">
    <location>
        <begin position="1"/>
        <end position="30"/>
    </location>
</feature>
<feature type="chain" id="PRO_0000247574" description="Hexokinase-2, chloroplastic">
    <location>
        <begin position="31"/>
        <end position="499"/>
    </location>
</feature>
<feature type="domain" description="Hexokinase" evidence="3">
    <location>
        <begin position="39"/>
        <end position="490"/>
    </location>
</feature>
<feature type="region of interest" description="Hexokinase small subdomain" evidence="3">
    <location>
        <begin position="94"/>
        <end position="232"/>
    </location>
</feature>
<feature type="region of interest" description="Hexokinase large subdomain" evidence="3">
    <location>
        <begin position="233"/>
        <end position="479"/>
    </location>
</feature>
<feature type="binding site" evidence="1">
    <location>
        <position position="108"/>
    </location>
    <ligand>
        <name>ADP</name>
        <dbReference type="ChEBI" id="CHEBI:456216"/>
    </ligand>
</feature>
<feature type="binding site" evidence="1">
    <location>
        <position position="109"/>
    </location>
    <ligand>
        <name>ADP</name>
        <dbReference type="ChEBI" id="CHEBI:456216"/>
    </ligand>
</feature>
<feature type="binding site" evidence="1">
    <location>
        <position position="110"/>
    </location>
    <ligand>
        <name>ADP</name>
        <dbReference type="ChEBI" id="CHEBI:456216"/>
    </ligand>
</feature>
<feature type="binding site" evidence="1">
    <location>
        <position position="198"/>
    </location>
    <ligand>
        <name>D-glucose</name>
        <dbReference type="ChEBI" id="CHEBI:4167"/>
    </ligand>
</feature>
<feature type="binding site" evidence="1">
    <location>
        <position position="199"/>
    </location>
    <ligand>
        <name>D-glucose</name>
        <dbReference type="ChEBI" id="CHEBI:4167"/>
    </ligand>
</feature>
<feature type="binding site" evidence="1">
    <location>
        <position position="233"/>
    </location>
    <ligand>
        <name>D-glucose</name>
        <dbReference type="ChEBI" id="CHEBI:4167"/>
    </ligand>
</feature>
<feature type="binding site" evidence="1">
    <location>
        <position position="234"/>
    </location>
    <ligand>
        <name>D-glucose</name>
        <dbReference type="ChEBI" id="CHEBI:4167"/>
    </ligand>
</feature>
<feature type="binding site" evidence="1">
    <location>
        <position position="257"/>
    </location>
    <ligand>
        <name>ADP</name>
        <dbReference type="ChEBI" id="CHEBI:456216"/>
    </ligand>
</feature>
<feature type="binding site" evidence="1">
    <location>
        <position position="260"/>
    </location>
    <ligand>
        <name>D-glucose</name>
        <dbReference type="ChEBI" id="CHEBI:4167"/>
    </ligand>
</feature>
<feature type="binding site" evidence="1">
    <location>
        <position position="288"/>
    </location>
    <ligand>
        <name>D-glucose</name>
        <dbReference type="ChEBI" id="CHEBI:4167"/>
    </ligand>
</feature>
<feature type="binding site" evidence="1">
    <location>
        <position position="318"/>
    </location>
    <ligand>
        <name>D-glucose</name>
        <dbReference type="ChEBI" id="CHEBI:4167"/>
    </ligand>
</feature>
<feature type="binding site" evidence="1">
    <location>
        <position position="444"/>
    </location>
    <ligand>
        <name>ADP</name>
        <dbReference type="ChEBI" id="CHEBI:456216"/>
    </ligand>
</feature>
<name>HXK2_TOBAC</name>
<sequence length="499" mass="53997">MSVTVSSPAGRSFHISRSPYKKISKPRVIIAAVRSGVSLAVAPILTKLQKDCATPLPVLRHVADAMAVDMRAGLAVDGGSDLKMILSYIDTLPTGNEKGLFYALDLGGTNFRVLRVQLGGKEERVIATEFEQVSIPQELMFATSEELFDFIASELGKFSQSEGGKFEMQQGRTREIGFTFSFPVKQTSVKSGILIKWTKGFAVSGTAGKDVVACLNEAMERQGLGMQVSALVNDTVATLAGARYWDNDVMVAVILGTGTNACYVERVDAIPKLPQRMSNSPETIVNTEWGAFSNGLPLTEFDREMDAESINPGEQIFEKTISGMYLGEIVRRVLVKMAKVGGLFGGGYVPEKLVTPFVLRTPDICAMQQDTSRDLEAVESVLYDIAGVKSDLSARKTVVDICDTIANRGGRLAGAGIVGILQKMEEDSKGVIFGKRTVVAMDGGLYEHYPQYREYLQEAVTELLGSEISKNVVIEHSKDGSGIGAALLAAANSKYEHDY</sequence>
<protein>
    <recommendedName>
        <fullName>Hexokinase-2, chloroplastic</fullName>
        <ecNumber evidence="6">2.7.1.1</ecNumber>
    </recommendedName>
    <alternativeName>
        <fullName>NtHxK2</fullName>
    </alternativeName>
</protein>
<accession>Q6Q8A5</accession>
<dbReference type="EC" id="2.7.1.1" evidence="6"/>
<dbReference type="EMBL" id="AY553215">
    <property type="protein sequence ID" value="AAS60193.1"/>
    <property type="molecule type" value="mRNA"/>
</dbReference>
<dbReference type="RefSeq" id="NP_001312431.1">
    <property type="nucleotide sequence ID" value="NM_001325502.1"/>
</dbReference>
<dbReference type="SMR" id="Q6Q8A5"/>
<dbReference type="STRING" id="4097.Q6Q8A5"/>
<dbReference type="PaxDb" id="4097-Q6Q8A5"/>
<dbReference type="GeneID" id="107790581"/>
<dbReference type="KEGG" id="nta:107790581"/>
<dbReference type="OMA" id="YPNFEGY"/>
<dbReference type="OrthoDB" id="419537at2759"/>
<dbReference type="BioCyc" id="MetaCyc:MONOMER-12872"/>
<dbReference type="BRENDA" id="2.7.1.1">
    <property type="organism ID" value="3645"/>
</dbReference>
<dbReference type="SABIO-RK" id="Q6Q8A5"/>
<dbReference type="UniPathway" id="UPA00109">
    <property type="reaction ID" value="UER00180"/>
</dbReference>
<dbReference type="UniPathway" id="UPA00242"/>
<dbReference type="Proteomes" id="UP000084051">
    <property type="component" value="Unplaced"/>
</dbReference>
<dbReference type="GO" id="GO:0009570">
    <property type="term" value="C:chloroplast stroma"/>
    <property type="evidence" value="ECO:0007669"/>
    <property type="project" value="UniProtKB-SubCell"/>
</dbReference>
<dbReference type="GO" id="GO:0005829">
    <property type="term" value="C:cytosol"/>
    <property type="evidence" value="ECO:0000318"/>
    <property type="project" value="GO_Central"/>
</dbReference>
<dbReference type="GO" id="GO:0005739">
    <property type="term" value="C:mitochondrion"/>
    <property type="evidence" value="ECO:0000318"/>
    <property type="project" value="GO_Central"/>
</dbReference>
<dbReference type="GO" id="GO:0005524">
    <property type="term" value="F:ATP binding"/>
    <property type="evidence" value="ECO:0007669"/>
    <property type="project" value="UniProtKB-KW"/>
</dbReference>
<dbReference type="GO" id="GO:0005536">
    <property type="term" value="F:D-glucose binding"/>
    <property type="evidence" value="ECO:0007669"/>
    <property type="project" value="InterPro"/>
</dbReference>
<dbReference type="GO" id="GO:0008865">
    <property type="term" value="F:fructokinase activity"/>
    <property type="evidence" value="ECO:0000318"/>
    <property type="project" value="GO_Central"/>
</dbReference>
<dbReference type="GO" id="GO:0004340">
    <property type="term" value="F:glucokinase activity"/>
    <property type="evidence" value="ECO:0000318"/>
    <property type="project" value="GO_Central"/>
</dbReference>
<dbReference type="GO" id="GO:0051156">
    <property type="term" value="P:glucose 6-phosphate metabolic process"/>
    <property type="evidence" value="ECO:0000318"/>
    <property type="project" value="GO_Central"/>
</dbReference>
<dbReference type="GO" id="GO:0006006">
    <property type="term" value="P:glucose metabolic process"/>
    <property type="evidence" value="ECO:0000318"/>
    <property type="project" value="GO_Central"/>
</dbReference>
<dbReference type="GO" id="GO:0006096">
    <property type="term" value="P:glycolytic process"/>
    <property type="evidence" value="ECO:0000318"/>
    <property type="project" value="GO_Central"/>
</dbReference>
<dbReference type="GO" id="GO:0001678">
    <property type="term" value="P:intracellular glucose homeostasis"/>
    <property type="evidence" value="ECO:0000318"/>
    <property type="project" value="GO_Central"/>
</dbReference>
<dbReference type="CDD" id="cd24020">
    <property type="entry name" value="ASKHA_NBD_HK_plant"/>
    <property type="match status" value="1"/>
</dbReference>
<dbReference type="FunFam" id="3.30.420.40:FF:000034">
    <property type="entry name" value="Phosphotransferase"/>
    <property type="match status" value="1"/>
</dbReference>
<dbReference type="FunFam" id="3.40.367.20:FF:000003">
    <property type="entry name" value="Phosphotransferase"/>
    <property type="match status" value="1"/>
</dbReference>
<dbReference type="Gene3D" id="3.30.420.40">
    <property type="match status" value="1"/>
</dbReference>
<dbReference type="Gene3D" id="3.40.367.20">
    <property type="match status" value="1"/>
</dbReference>
<dbReference type="InterPro" id="IPR043129">
    <property type="entry name" value="ATPase_NBD"/>
</dbReference>
<dbReference type="InterPro" id="IPR001312">
    <property type="entry name" value="Hexokinase"/>
</dbReference>
<dbReference type="InterPro" id="IPR022673">
    <property type="entry name" value="Hexokinase_C"/>
</dbReference>
<dbReference type="InterPro" id="IPR022672">
    <property type="entry name" value="Hexokinase_N"/>
</dbReference>
<dbReference type="PANTHER" id="PTHR19443">
    <property type="entry name" value="HEXOKINASE"/>
    <property type="match status" value="1"/>
</dbReference>
<dbReference type="PANTHER" id="PTHR19443:SF63">
    <property type="entry name" value="HEXOKINASE-LIKE 1 PROTEIN-RELATED"/>
    <property type="match status" value="1"/>
</dbReference>
<dbReference type="Pfam" id="PF00349">
    <property type="entry name" value="Hexokinase_1"/>
    <property type="match status" value="1"/>
</dbReference>
<dbReference type="Pfam" id="PF03727">
    <property type="entry name" value="Hexokinase_2"/>
    <property type="match status" value="1"/>
</dbReference>
<dbReference type="PRINTS" id="PR00475">
    <property type="entry name" value="HEXOKINASE"/>
</dbReference>
<dbReference type="SUPFAM" id="SSF53067">
    <property type="entry name" value="Actin-like ATPase domain"/>
    <property type="match status" value="2"/>
</dbReference>
<dbReference type="PROSITE" id="PS51748">
    <property type="entry name" value="HEXOKINASE_2"/>
    <property type="match status" value="1"/>
</dbReference>
<proteinExistence type="evidence at transcript level"/>